<dbReference type="EMBL" id="AE006468">
    <property type="protein sequence ID" value="AAL21887.1"/>
    <property type="molecule type" value="Genomic_DNA"/>
</dbReference>
<dbReference type="RefSeq" id="NP_461928.1">
    <property type="nucleotide sequence ID" value="NC_003197.2"/>
</dbReference>
<dbReference type="RefSeq" id="WP_000201030.1">
    <property type="nucleotide sequence ID" value="NC_003197.2"/>
</dbReference>
<dbReference type="SMR" id="P0CL11"/>
<dbReference type="STRING" id="99287.STM3011"/>
<dbReference type="PaxDb" id="99287-STM3011"/>
<dbReference type="GeneID" id="1254534"/>
<dbReference type="KEGG" id="stm:STM3011"/>
<dbReference type="PATRIC" id="fig|99287.12.peg.3187"/>
<dbReference type="HOGENOM" id="CLU_037628_6_0_6"/>
<dbReference type="OMA" id="HSEFVFM"/>
<dbReference type="PhylomeDB" id="P0CL11"/>
<dbReference type="BioCyc" id="SENT99287:STM3011-MONOMER"/>
<dbReference type="UniPathway" id="UPA00214"/>
<dbReference type="Proteomes" id="UP000001014">
    <property type="component" value="Chromosome"/>
</dbReference>
<dbReference type="GO" id="GO:0003700">
    <property type="term" value="F:DNA-binding transcription factor activity"/>
    <property type="evidence" value="ECO:0000318"/>
    <property type="project" value="GO_Central"/>
</dbReference>
<dbReference type="GO" id="GO:0000976">
    <property type="term" value="F:transcription cis-regulatory region binding"/>
    <property type="evidence" value="ECO:0000318"/>
    <property type="project" value="GO_Central"/>
</dbReference>
<dbReference type="GO" id="GO:0006012">
    <property type="term" value="P:galactose metabolic process"/>
    <property type="evidence" value="ECO:0007669"/>
    <property type="project" value="UniProtKB-UniPathway"/>
</dbReference>
<dbReference type="GO" id="GO:0006355">
    <property type="term" value="P:regulation of DNA-templated transcription"/>
    <property type="evidence" value="ECO:0000318"/>
    <property type="project" value="GO_Central"/>
</dbReference>
<dbReference type="CDD" id="cd01392">
    <property type="entry name" value="HTH_LacI"/>
    <property type="match status" value="1"/>
</dbReference>
<dbReference type="CDD" id="cd06270">
    <property type="entry name" value="PBP1_GalS-like"/>
    <property type="match status" value="1"/>
</dbReference>
<dbReference type="FunFam" id="3.40.50.2300:FF:000027">
    <property type="entry name" value="HTH-type transcriptional regulator GalR"/>
    <property type="match status" value="1"/>
</dbReference>
<dbReference type="FunFam" id="3.40.50.2300:FF:000048">
    <property type="entry name" value="HTH-type transcriptional regulator GalR"/>
    <property type="match status" value="1"/>
</dbReference>
<dbReference type="Gene3D" id="3.40.50.2300">
    <property type="match status" value="2"/>
</dbReference>
<dbReference type="Gene3D" id="1.10.260.40">
    <property type="entry name" value="lambda repressor-like DNA-binding domains"/>
    <property type="match status" value="1"/>
</dbReference>
<dbReference type="InterPro" id="IPR000843">
    <property type="entry name" value="HTH_LacI"/>
</dbReference>
<dbReference type="InterPro" id="IPR046335">
    <property type="entry name" value="LacI/GalR-like_sensor"/>
</dbReference>
<dbReference type="InterPro" id="IPR010982">
    <property type="entry name" value="Lambda_DNA-bd_dom_sf"/>
</dbReference>
<dbReference type="InterPro" id="IPR028082">
    <property type="entry name" value="Peripla_BP_I"/>
</dbReference>
<dbReference type="NCBIfam" id="NF008002">
    <property type="entry name" value="PRK10727.1"/>
    <property type="match status" value="1"/>
</dbReference>
<dbReference type="PANTHER" id="PTHR30146:SF98">
    <property type="entry name" value="HTH-TYPE TRANSCRIPTIONAL REGULATOR GALR"/>
    <property type="match status" value="1"/>
</dbReference>
<dbReference type="PANTHER" id="PTHR30146">
    <property type="entry name" value="LACI-RELATED TRANSCRIPTIONAL REPRESSOR"/>
    <property type="match status" value="1"/>
</dbReference>
<dbReference type="Pfam" id="PF00356">
    <property type="entry name" value="LacI"/>
    <property type="match status" value="1"/>
</dbReference>
<dbReference type="Pfam" id="PF13377">
    <property type="entry name" value="Peripla_BP_3"/>
    <property type="match status" value="1"/>
</dbReference>
<dbReference type="PRINTS" id="PR00036">
    <property type="entry name" value="HTHLACI"/>
</dbReference>
<dbReference type="SMART" id="SM00354">
    <property type="entry name" value="HTH_LACI"/>
    <property type="match status" value="1"/>
</dbReference>
<dbReference type="SUPFAM" id="SSF47413">
    <property type="entry name" value="lambda repressor-like DNA-binding domains"/>
    <property type="match status" value="1"/>
</dbReference>
<dbReference type="SUPFAM" id="SSF53822">
    <property type="entry name" value="Periplasmic binding protein-like I"/>
    <property type="match status" value="1"/>
</dbReference>
<dbReference type="PROSITE" id="PS00356">
    <property type="entry name" value="HTH_LACI_1"/>
    <property type="match status" value="1"/>
</dbReference>
<dbReference type="PROSITE" id="PS50932">
    <property type="entry name" value="HTH_LACI_2"/>
    <property type="match status" value="1"/>
</dbReference>
<name>GALR_SALTY</name>
<feature type="chain" id="PRO_0000107952" description="HTH-type transcriptional regulator GalR">
    <location>
        <begin position="1"/>
        <end position="342"/>
    </location>
</feature>
<feature type="domain" description="HTH lacI-type" evidence="2">
    <location>
        <begin position="1"/>
        <end position="56"/>
    </location>
</feature>
<feature type="DNA-binding region" description="H-T-H motif" evidence="2">
    <location>
        <begin position="4"/>
        <end position="23"/>
    </location>
</feature>
<gene>
    <name type="primary">galR</name>
    <name type="ordered locus">STM3011</name>
</gene>
<comment type="function">
    <text evidence="1">Repressor of the galactose operon. Binds galactose as an inducer (By similarity).</text>
</comment>
<comment type="pathway">
    <text>Carbohydrate metabolism; galactose metabolism [regulation].</text>
</comment>
<comment type="subunit">
    <text evidence="1">Homodimer.</text>
</comment>
<protein>
    <recommendedName>
        <fullName>HTH-type transcriptional regulator GalR</fullName>
    </recommendedName>
    <alternativeName>
        <fullName>Galactose operon repressor</fullName>
    </alternativeName>
</protein>
<evidence type="ECO:0000250" key="1"/>
<evidence type="ECO:0000255" key="2">
    <source>
        <dbReference type="PROSITE-ProRule" id="PRU00111"/>
    </source>
</evidence>
<keyword id="KW-0119">Carbohydrate metabolism</keyword>
<keyword id="KW-0238">DNA-binding</keyword>
<keyword id="KW-0299">Galactose metabolism</keyword>
<keyword id="KW-1185">Reference proteome</keyword>
<keyword id="KW-0678">Repressor</keyword>
<keyword id="KW-0804">Transcription</keyword>
<keyword id="KW-0805">Transcription regulation</keyword>
<proteinExistence type="inferred from homology"/>
<organism>
    <name type="scientific">Salmonella typhimurium (strain LT2 / SGSC1412 / ATCC 700720)</name>
    <dbReference type="NCBI Taxonomy" id="99287"/>
    <lineage>
        <taxon>Bacteria</taxon>
        <taxon>Pseudomonadati</taxon>
        <taxon>Pseudomonadota</taxon>
        <taxon>Gammaproteobacteria</taxon>
        <taxon>Enterobacterales</taxon>
        <taxon>Enterobacteriaceae</taxon>
        <taxon>Salmonella</taxon>
    </lineage>
</organism>
<sequence>MATIKDVARLAGVSVATVSRVINDSPKASEASRLAVTSAMESLSYHPNANARALAQQATETLGLVVGDVSDPFFGAMVKAVEQVAYHTGNFLLIGNGYHNEQKERQAIEQLIRHRCAALVVHAKMIPDADLASLMKQIPGMVLINRILPGLEHRCVALDDRYGAWLATRHLIQQGHTRIGYICSNHTISDAEDRLRGYYDALAESHIPANDRLVTFGEPDESGGEQAMTELLGRGRNFTAVACYNDSMAAGAMGVLNDNGVGVPGEVSLIGFDDVLVSRYVRPRLTTIRYPIVTMATQAAELALALAGKCPTPEVTHVFSPTLVRRHSVSTPTDTGHLSTTD</sequence>
<reference key="1">
    <citation type="journal article" date="2001" name="Nature">
        <title>Complete genome sequence of Salmonella enterica serovar Typhimurium LT2.</title>
        <authorList>
            <person name="McClelland M."/>
            <person name="Sanderson K.E."/>
            <person name="Spieth J."/>
            <person name="Clifton S.W."/>
            <person name="Latreille P."/>
            <person name="Courtney L."/>
            <person name="Porwollik S."/>
            <person name="Ali J."/>
            <person name="Dante M."/>
            <person name="Du F."/>
            <person name="Hou S."/>
            <person name="Layman D."/>
            <person name="Leonard S."/>
            <person name="Nguyen C."/>
            <person name="Scott K."/>
            <person name="Holmes A."/>
            <person name="Grewal N."/>
            <person name="Mulvaney E."/>
            <person name="Ryan E."/>
            <person name="Sun H."/>
            <person name="Florea L."/>
            <person name="Miller W."/>
            <person name="Stoneking T."/>
            <person name="Nhan M."/>
            <person name="Waterston R."/>
            <person name="Wilson R.K."/>
        </authorList>
    </citation>
    <scope>NUCLEOTIDE SEQUENCE [LARGE SCALE GENOMIC DNA]</scope>
    <source>
        <strain>LT2 / SGSC1412 / ATCC 700720</strain>
    </source>
</reference>
<accession>P0CL11</accession>
<accession>P74866</accession>